<organism>
    <name type="scientific">Hepatitis B virus genotype G (isolate IG29227/2000)</name>
    <name type="common">HBV-G</name>
    <dbReference type="NCBI Taxonomy" id="489538"/>
    <lineage>
        <taxon>Viruses</taxon>
        <taxon>Riboviria</taxon>
        <taxon>Pararnavirae</taxon>
        <taxon>Artverviricota</taxon>
        <taxon>Revtraviricetes</taxon>
        <taxon>Blubervirales</taxon>
        <taxon>Hepadnaviridae</taxon>
        <taxon>Orthohepadnavirus</taxon>
        <taxon>Hepatitis B virus</taxon>
        <taxon>hepatitis B virus genotype G</taxon>
    </lineage>
</organism>
<reference key="1">
    <citation type="journal article" date="2000" name="J. Gen. Virol.">
        <title>A new genotype of hepatitis B virus: complete genome and phylogenetic relatedness.</title>
        <authorList>
            <person name="Stuyver L."/>
            <person name="De Gendt S."/>
            <person name="Van Geyt C."/>
            <person name="Zoulim F."/>
            <person name="Fried M."/>
            <person name="Schinazi R.F."/>
            <person name="Rossau R."/>
        </authorList>
    </citation>
    <scope>NUCLEOTIDE SEQUENCE [GENOMIC DNA]</scope>
</reference>
<dbReference type="EMBL" id="AF160501">
    <property type="status" value="NOT_ANNOTATED_CDS"/>
    <property type="molecule type" value="Genomic_DNA"/>
</dbReference>
<dbReference type="SMR" id="P0C682"/>
<dbReference type="Proteomes" id="UP000007407">
    <property type="component" value="Segment"/>
</dbReference>
<dbReference type="GO" id="GO:0043657">
    <property type="term" value="C:host cell"/>
    <property type="evidence" value="ECO:0007669"/>
    <property type="project" value="GOC"/>
</dbReference>
<dbReference type="GO" id="GO:0030430">
    <property type="term" value="C:host cell cytoplasm"/>
    <property type="evidence" value="ECO:0007669"/>
    <property type="project" value="UniProtKB-SubCell"/>
</dbReference>
<dbReference type="GO" id="GO:0039619">
    <property type="term" value="C:T=4 icosahedral viral capsid"/>
    <property type="evidence" value="ECO:0007669"/>
    <property type="project" value="UniProtKB-UniRule"/>
</dbReference>
<dbReference type="GO" id="GO:0003677">
    <property type="term" value="F:DNA binding"/>
    <property type="evidence" value="ECO:0007669"/>
    <property type="project" value="UniProtKB-UniRule"/>
</dbReference>
<dbReference type="GO" id="GO:0003723">
    <property type="term" value="F:RNA binding"/>
    <property type="evidence" value="ECO:0007669"/>
    <property type="project" value="UniProtKB-UniRule"/>
</dbReference>
<dbReference type="GO" id="GO:0005198">
    <property type="term" value="F:structural molecule activity"/>
    <property type="evidence" value="ECO:0007669"/>
    <property type="project" value="UniProtKB-UniRule"/>
</dbReference>
<dbReference type="GO" id="GO:0075521">
    <property type="term" value="P:microtubule-dependent intracellular transport of viral material towards nucleus"/>
    <property type="evidence" value="ECO:0007669"/>
    <property type="project" value="UniProtKB-UniRule"/>
</dbReference>
<dbReference type="GO" id="GO:0046718">
    <property type="term" value="P:symbiont entry into host cell"/>
    <property type="evidence" value="ECO:0007669"/>
    <property type="project" value="UniProtKB-UniRule"/>
</dbReference>
<dbReference type="GO" id="GO:0075732">
    <property type="term" value="P:viral penetration into host nucleus"/>
    <property type="evidence" value="ECO:0007669"/>
    <property type="project" value="UniProtKB-UniRule"/>
</dbReference>
<dbReference type="FunFam" id="1.10.4090.10:FF:000001">
    <property type="entry name" value="Capsid protein"/>
    <property type="match status" value="1"/>
</dbReference>
<dbReference type="Gene3D" id="1.10.4090.10">
    <property type="entry name" value="Viral capsid, core domain supefamily, Hepatitis B virus"/>
    <property type="match status" value="1"/>
</dbReference>
<dbReference type="HAMAP" id="MF_04076">
    <property type="entry name" value="HBV_HBEAG"/>
    <property type="match status" value="1"/>
</dbReference>
<dbReference type="InterPro" id="IPR002006">
    <property type="entry name" value="Hepatitis_core"/>
</dbReference>
<dbReference type="InterPro" id="IPR036459">
    <property type="entry name" value="Viral_capsid_core_dom_sf_HBV"/>
</dbReference>
<dbReference type="Pfam" id="PF00906">
    <property type="entry name" value="Hepatitis_core"/>
    <property type="match status" value="3"/>
</dbReference>
<dbReference type="SUPFAM" id="SSF47852">
    <property type="entry name" value="Hepatitis B viral capsid (hbcag)"/>
    <property type="match status" value="1"/>
</dbReference>
<sequence>MDRTTLPYGLFGLDIDPYKEFGATVELLSFLPSDFFPSVRDLLDTASALYRESLESSDHCSPHHTALRQAILCWGELMTLATWVGNNLEDPASRDLVVNYVNTNMGLKIRQLLWFHISCLTFGRETVLEYLVSFGVWIRTPPAYRPPNAPILSTLPETTVVRRRGRSPRRRTPSPRRRRSQSPRRRRSASPASQC</sequence>
<keyword id="KW-0167">Capsid protein</keyword>
<keyword id="KW-1176">Cytoplasmic inwards viral transport</keyword>
<keyword id="KW-0238">DNA-binding</keyword>
<keyword id="KW-1035">Host cytoplasm</keyword>
<keyword id="KW-0945">Host-virus interaction</keyword>
<keyword id="KW-1177">Microtubular inwards viral transport</keyword>
<keyword id="KW-0597">Phosphoprotein</keyword>
<keyword id="KW-0677">Repeat</keyword>
<keyword id="KW-0694">RNA-binding</keyword>
<keyword id="KW-1144">T=4 icosahedral capsid protein</keyword>
<keyword id="KW-1163">Viral penetration into host nucleus</keyword>
<keyword id="KW-0946">Virion</keyword>
<keyword id="KW-1160">Virus entry into host cell</keyword>
<evidence type="ECO:0000255" key="1">
    <source>
        <dbReference type="HAMAP-Rule" id="MF_04076"/>
    </source>
</evidence>
<evidence type="ECO:0000256" key="2">
    <source>
        <dbReference type="SAM" id="MobiDB-lite"/>
    </source>
</evidence>
<proteinExistence type="inferred from homology"/>
<feature type="chain" id="PRO_0000324377" description="Capsid protein">
    <location>
        <begin position="1"/>
        <end position="195"/>
    </location>
</feature>
<feature type="repeat" description="1; half-length">
    <location>
        <begin position="167"/>
        <end position="172"/>
    </location>
</feature>
<feature type="repeat" description="2">
    <location>
        <begin position="174"/>
        <end position="180"/>
    </location>
</feature>
<feature type="repeat" description="3">
    <location>
        <begin position="182"/>
        <end position="188"/>
    </location>
</feature>
<feature type="region of interest" description="Disordered" evidence="2">
    <location>
        <begin position="148"/>
        <end position="195"/>
    </location>
</feature>
<feature type="region of interest" description="3 X 7 AA repeats of S-P-R-R-R-[PR]-S">
    <location>
        <begin position="167"/>
        <end position="188"/>
    </location>
</feature>
<feature type="region of interest" description="RNA binding" evidence="1">
    <location>
        <begin position="189"/>
        <end position="195"/>
    </location>
</feature>
<feature type="short sequence motif" description="Bipartite nuclear localization signal" evidence="1">
    <location>
        <begin position="170"/>
        <end position="187"/>
    </location>
</feature>
<feature type="compositionally biased region" description="Basic residues" evidence="2">
    <location>
        <begin position="161"/>
        <end position="188"/>
    </location>
</feature>
<feature type="modified residue" description="Phosphoserine; by host" evidence="1">
    <location>
        <position position="167"/>
    </location>
</feature>
<feature type="modified residue" description="Phosphoserine; by host" evidence="1">
    <location>
        <position position="174"/>
    </location>
</feature>
<feature type="modified residue" description="Phosphoserine; by host" evidence="1">
    <location>
        <position position="182"/>
    </location>
</feature>
<organismHost>
    <name type="scientific">Homo sapiens</name>
    <name type="common">Human</name>
    <dbReference type="NCBI Taxonomy" id="9606"/>
</organismHost>
<organismHost>
    <name type="scientific">Pan troglodytes</name>
    <name type="common">Chimpanzee</name>
    <dbReference type="NCBI Taxonomy" id="9598"/>
</organismHost>
<accession>P0C682</accession>
<gene>
    <name evidence="1" type="primary">C</name>
</gene>
<name>CAPSD_HBVG3</name>
<comment type="function">
    <text evidence="1">Self assembles to form an icosahedral capsid. Most capsids appear to be large particles with an icosahedral symmetry of T=4 and consist of 240 copies of capsid protein, though a fraction forms smaller T=3 particles consisting of 180 capsid proteins. Entering capsids are transported along microtubules to the nucleus. Phosphorylation of the capsid is thought to induce exposure of nuclear localization signal in the C-terminal portion of the capsid protein that allows binding to the nuclear pore complex via the importin (karyopherin-) alpha and beta. Capsids are imported in intact form through the nuclear pore into the nuclear basket, where it probably binds NUP153. Only capsids that contain the mature viral genome can release the viral DNA and capsid protein into the nucleoplasm. Immature capsids get stuck in the basket. Capsids encapsulate the pre-genomic RNA and the P protein. Pre-genomic RNA is reverse-transcribed into DNA while the capsid is still in the cytoplasm. The capsid can then either be directed to the nucleus, providing more genomes for transcription, or bud through the endoplasmic reticulum to provide new virions.</text>
</comment>
<comment type="subunit">
    <text evidence="1">Homodimerizes, then multimerizes. Interacts with cytosol exposed regions of viral L glycoprotein present in the reticulum-to-Golgi compartment. Interacts with human FLNB. Phosphorylated form interacts with host importin alpha; this interaction depends on the exposure of the NLS, which itself depends upon genome maturation and/or phosphorylation of the capsid protein. Interacts with host NUP153.</text>
</comment>
<comment type="subcellular location">
    <subcellularLocation>
        <location evidence="1">Virion</location>
    </subcellularLocation>
    <subcellularLocation>
        <location evidence="1">Host cytoplasm</location>
    </subcellularLocation>
</comment>
<comment type="PTM">
    <text evidence="1">Phosphorylated by host SRPK1, SRPK2, and maybe protein kinase C or GAPDH. Phosphorylation is critical for pregenomic RNA packaging. Protein kinase C phosphorylation is stimulated by HBx protein and may play a role in transport of the viral genome to the nucleus at the late step during the viral replication cycle.</text>
</comment>
<comment type="similarity">
    <text evidence="1">Belongs to the orthohepadnavirus core antigen family.</text>
</comment>
<protein>
    <recommendedName>
        <fullName evidence="1">Capsid protein</fullName>
    </recommendedName>
    <alternativeName>
        <fullName evidence="1">Core antigen</fullName>
    </alternativeName>
    <alternativeName>
        <fullName evidence="1">Core protein</fullName>
    </alternativeName>
    <alternativeName>
        <fullName evidence="1">HBcAg</fullName>
    </alternativeName>
    <alternativeName>
        <fullName evidence="1">p21.5</fullName>
    </alternativeName>
</protein>